<comment type="catalytic activity">
    <reaction>
        <text>diphosphate + H2O = 2 phosphate + H(+)</text>
        <dbReference type="Rhea" id="RHEA:24576"/>
        <dbReference type="ChEBI" id="CHEBI:15377"/>
        <dbReference type="ChEBI" id="CHEBI:15378"/>
        <dbReference type="ChEBI" id="CHEBI:33019"/>
        <dbReference type="ChEBI" id="CHEBI:43474"/>
        <dbReference type="EC" id="3.6.1.1"/>
    </reaction>
</comment>
<comment type="cofactor">
    <cofactor evidence="1">
        <name>Mg(2+)</name>
        <dbReference type="ChEBI" id="CHEBI:18420"/>
    </cofactor>
</comment>
<comment type="subunit">
    <text evidence="1">Homodimer.</text>
</comment>
<comment type="subcellular location">
    <subcellularLocation>
        <location evidence="1">Cytoplasm</location>
    </subcellularLocation>
</comment>
<comment type="tissue specificity">
    <text evidence="2">Expressed ubiquitously.</text>
</comment>
<comment type="similarity">
    <text evidence="4">Belongs to the PPase family.</text>
</comment>
<organism>
    <name type="scientific">Homo sapiens</name>
    <name type="common">Human</name>
    <dbReference type="NCBI Taxonomy" id="9606"/>
    <lineage>
        <taxon>Eukaryota</taxon>
        <taxon>Metazoa</taxon>
        <taxon>Chordata</taxon>
        <taxon>Craniata</taxon>
        <taxon>Vertebrata</taxon>
        <taxon>Euteleostomi</taxon>
        <taxon>Mammalia</taxon>
        <taxon>Eutheria</taxon>
        <taxon>Euarchontoglires</taxon>
        <taxon>Primates</taxon>
        <taxon>Haplorrhini</taxon>
        <taxon>Catarrhini</taxon>
        <taxon>Hominidae</taxon>
        <taxon>Homo</taxon>
    </lineage>
</organism>
<feature type="initiator methionine" description="Removed" evidence="5 8 9">
    <location>
        <position position="1"/>
    </location>
</feature>
<feature type="chain" id="PRO_0000137567" description="Inorganic pyrophosphatase">
    <location>
        <begin position="2"/>
        <end position="289"/>
    </location>
</feature>
<feature type="binding site" evidence="1">
    <location>
        <position position="116"/>
    </location>
    <ligand>
        <name>Mg(2+)</name>
        <dbReference type="ChEBI" id="CHEBI:18420"/>
        <label>1</label>
    </ligand>
</feature>
<feature type="binding site" evidence="1">
    <location>
        <position position="121"/>
    </location>
    <ligand>
        <name>Mg(2+)</name>
        <dbReference type="ChEBI" id="CHEBI:18420"/>
        <label>1</label>
    </ligand>
</feature>
<feature type="binding site" evidence="1">
    <location>
        <position position="121"/>
    </location>
    <ligand>
        <name>Mg(2+)</name>
        <dbReference type="ChEBI" id="CHEBI:18420"/>
        <label>2</label>
    </ligand>
</feature>
<feature type="binding site" evidence="1">
    <location>
        <position position="153"/>
    </location>
    <ligand>
        <name>Mg(2+)</name>
        <dbReference type="ChEBI" id="CHEBI:18420"/>
        <label>1</label>
    </ligand>
</feature>
<feature type="modified residue" description="N-acetylserine" evidence="5 8 9">
    <location>
        <position position="2"/>
    </location>
</feature>
<feature type="modified residue" description="N6-acetyllysine" evidence="6">
    <location>
        <position position="57"/>
    </location>
</feature>
<feature type="modified residue" description="N6-acetyllysine" evidence="6">
    <location>
        <position position="228"/>
    </location>
</feature>
<feature type="modified residue" description="Phosphoserine" evidence="7">
    <location>
        <position position="250"/>
    </location>
</feature>
<feature type="sequence variant" id="VAR_036358" description="In a breast cancer sample; somatic mutation." evidence="3">
    <original>K</original>
    <variation>N</variation>
    <location>
        <position position="57"/>
    </location>
</feature>
<feature type="sequence conflict" description="In Ref. 8; AAD24964." evidence="4" ref="8">
    <original>P</original>
    <variation>A</variation>
    <location>
        <position position="12"/>
    </location>
</feature>
<feature type="sequence conflict" description="In Ref. 10; CAA88494." evidence="4" ref="10">
    <original>L</original>
    <variation>I</variation>
    <location>
        <position position="84"/>
    </location>
</feature>
<feature type="sequence conflict" description="In Ref. 10; CAA88494." evidence="4" ref="10">
    <original>AI</original>
    <variation>TL</variation>
    <location>
        <begin position="96"/>
        <end position="97"/>
    </location>
</feature>
<feature type="sequence conflict" description="In Ref. 10; CAA88494." evidence="4" ref="10">
    <original>GHNDKHTGCC</original>
    <variation>HEKDKSTNCF</variation>
    <location>
        <begin position="105"/>
        <end position="114"/>
    </location>
</feature>
<feature type="sequence conflict" description="In Ref. 10; CAA88494." evidence="4" ref="10">
    <original>VCARGEIIGVKV</original>
    <variation>ILSCGEVIHVKI</variation>
    <location>
        <begin position="129"/>
        <end position="140"/>
    </location>
</feature>
<feature type="sequence conflict" description="In Ref. 10; CAA88494." evidence="4" ref="10">
    <original>M</original>
    <variation>L</variation>
    <location>
        <position position="146"/>
    </location>
</feature>
<feature type="sequence conflict" description="In Ref. 10; CAA88494." evidence="4" ref="10">
    <original>V</original>
    <variation>L</variation>
    <location>
        <position position="156"/>
    </location>
</feature>
<feature type="sequence conflict" description="In Ref. 10; CAA88494." evidence="4" ref="10">
    <original>VD</original>
    <variation>AN</variation>
    <location>
        <begin position="161"/>
        <end position="162"/>
    </location>
</feature>
<feature type="sequence conflict" description="In Ref. 10; CAA88494." evidence="4" ref="10">
    <original>DAANYNDIN</original>
    <variation>EASKFHDID</variation>
    <location>
        <begin position="165"/>
        <end position="173"/>
    </location>
</feature>
<feature type="sequence conflict" description="In Ref. 10; CAA88494." evidence="4" ref="10">
    <original>RL</original>
    <variation>KF</variation>
    <location>
        <begin position="177"/>
        <end position="178"/>
    </location>
</feature>
<feature type="sequence conflict" description="In Ref. 10; CAA88494." evidence="4" ref="10">
    <original>VD</original>
    <variation>LN</variation>
    <location>
        <begin position="187"/>
        <end position="188"/>
    </location>
</feature>
<feature type="sequence conflict" description="In Ref. 10; CAA88494." evidence="4" ref="10">
    <original>R</original>
    <variation>L</variation>
    <location>
        <position position="192"/>
    </location>
</feature>
<feature type="strand" evidence="11">
    <location>
        <begin position="5"/>
        <end position="10"/>
    </location>
</feature>
<feature type="strand" evidence="11">
    <location>
        <begin position="14"/>
        <end position="16"/>
    </location>
</feature>
<feature type="strand" evidence="11">
    <location>
        <begin position="18"/>
        <end position="22"/>
    </location>
</feature>
<feature type="turn" evidence="11">
    <location>
        <begin position="31"/>
        <end position="34"/>
    </location>
</feature>
<feature type="strand" evidence="11">
    <location>
        <begin position="37"/>
        <end position="40"/>
    </location>
</feature>
<feature type="strand" evidence="11">
    <location>
        <begin position="43"/>
        <end position="50"/>
    </location>
</feature>
<feature type="strand" evidence="11">
    <location>
        <begin position="58"/>
        <end position="60"/>
    </location>
</feature>
<feature type="strand" evidence="11">
    <location>
        <begin position="69"/>
        <end position="71"/>
    </location>
</feature>
<feature type="strand" evidence="11">
    <location>
        <begin position="91"/>
        <end position="96"/>
    </location>
</feature>
<feature type="turn" evidence="10">
    <location>
        <begin position="109"/>
        <end position="111"/>
    </location>
</feature>
<feature type="strand" evidence="11">
    <location>
        <begin position="117"/>
        <end position="119"/>
    </location>
</feature>
<feature type="strand" evidence="11">
    <location>
        <begin position="121"/>
        <end position="124"/>
    </location>
</feature>
<feature type="strand" evidence="10">
    <location>
        <begin position="126"/>
        <end position="128"/>
    </location>
</feature>
<feature type="strand" evidence="11">
    <location>
        <begin position="135"/>
        <end position="148"/>
    </location>
</feature>
<feature type="strand" evidence="11">
    <location>
        <begin position="151"/>
        <end position="160"/>
    </location>
</feature>
<feature type="helix" evidence="11">
    <location>
        <begin position="166"/>
        <end position="168"/>
    </location>
</feature>
<feature type="helix" evidence="11">
    <location>
        <begin position="172"/>
        <end position="178"/>
    </location>
</feature>
<feature type="helix" evidence="11">
    <location>
        <begin position="182"/>
        <end position="194"/>
    </location>
</feature>
<feature type="helix" evidence="10">
    <location>
        <begin position="195"/>
        <end position="197"/>
    </location>
</feature>
<feature type="turn" evidence="11">
    <location>
        <begin position="203"/>
        <end position="205"/>
    </location>
</feature>
<feature type="strand" evidence="11">
    <location>
        <begin position="206"/>
        <end position="211"/>
    </location>
</feature>
<feature type="helix" evidence="11">
    <location>
        <begin position="213"/>
        <end position="231"/>
    </location>
</feature>
<feature type="strand" evidence="11">
    <location>
        <begin position="244"/>
        <end position="246"/>
    </location>
</feature>
<feature type="helix" evidence="11">
    <location>
        <begin position="256"/>
        <end position="264"/>
    </location>
</feature>
<feature type="helix" evidence="11">
    <location>
        <begin position="278"/>
        <end position="281"/>
    </location>
</feature>
<reference key="1">
    <citation type="journal article" date="1999" name="Biochim. Biophys. Acta">
        <title>Cloning and expression profile of human inorganic pyrophosphatase.</title>
        <authorList>
            <person name="Fairchild T.A."/>
            <person name="Patejunas G."/>
        </authorList>
    </citation>
    <scope>NUCLEOTIDE SEQUENCE [MRNA]</scope>
    <scope>TISSUE SPECIFICITY</scope>
    <source>
        <tissue>Heart</tissue>
    </source>
</reference>
<reference key="2">
    <citation type="submission" date="1999-04" db="EMBL/GenBank/DDBJ databases">
        <title>Putative inorganic pyrophosphatase.</title>
        <authorList>
            <person name="Saito T."/>
            <person name="Hattori A."/>
            <person name="Miyajima N."/>
        </authorList>
    </citation>
    <scope>NUCLEOTIDE SEQUENCE [MRNA]</scope>
    <source>
        <tissue>Brain</tissue>
    </source>
</reference>
<reference key="3">
    <citation type="submission" date="1999-12" db="EMBL/GenBank/DDBJ databases">
        <title>Cloning of a human inorganic pyrophosphatase cDNA.</title>
        <authorList>
            <person name="Kanni L."/>
            <person name="Johansson M."/>
            <person name="Karlsson A."/>
        </authorList>
    </citation>
    <scope>NUCLEOTIDE SEQUENCE [MRNA]</scope>
</reference>
<reference key="4">
    <citation type="submission" date="2003-07" db="EMBL/GenBank/DDBJ databases">
        <title>Cloning and characterization of a novel human cDNA homology to bovine inorganic pyrophosphatase mRNA.</title>
        <authorList>
            <person name="Dai F.Y."/>
            <person name="Yu L."/>
            <person name="Hu P.R."/>
            <person name="Xin Y.R."/>
            <person name="Xu Y.F."/>
            <person name="Zhao S.Y."/>
        </authorList>
    </citation>
    <scope>NUCLEOTIDE SEQUENCE [MRNA]</scope>
</reference>
<reference key="5">
    <citation type="journal article" date="2000" name="Proc. Natl. Acad. Sci. U.S.A.">
        <title>Gene expression profiling in the human hypothalamus-pituitary-adrenal axis and full-length cDNA cloning.</title>
        <authorList>
            <person name="Hu R.-M."/>
            <person name="Han Z.-G."/>
            <person name="Song H.-D."/>
            <person name="Peng Y.-D."/>
            <person name="Huang Q.-H."/>
            <person name="Ren S.-X."/>
            <person name="Gu Y.-J."/>
            <person name="Huang C.-H."/>
            <person name="Li Y.-B."/>
            <person name="Jiang C.-L."/>
            <person name="Fu G."/>
            <person name="Zhang Q.-H."/>
            <person name="Gu B.-W."/>
            <person name="Dai M."/>
            <person name="Mao Y.-F."/>
            <person name="Gao G.-F."/>
            <person name="Rong R."/>
            <person name="Ye M."/>
            <person name="Zhou J."/>
            <person name="Xu S.-H."/>
            <person name="Gu J."/>
            <person name="Shi J.-X."/>
            <person name="Jin W.-R."/>
            <person name="Zhang C.-K."/>
            <person name="Wu T.-M."/>
            <person name="Huang G.-Y."/>
            <person name="Chen Z."/>
            <person name="Chen M.-D."/>
            <person name="Chen J.-L."/>
        </authorList>
    </citation>
    <scope>NUCLEOTIDE SEQUENCE [LARGE SCALE MRNA]</scope>
    <source>
        <tissue>Adrenal gland</tissue>
    </source>
</reference>
<reference key="6">
    <citation type="journal article" date="2004" name="Nature">
        <title>The DNA sequence and comparative analysis of human chromosome 10.</title>
        <authorList>
            <person name="Deloukas P."/>
            <person name="Earthrowl M.E."/>
            <person name="Grafham D.V."/>
            <person name="Rubenfield M."/>
            <person name="French L."/>
            <person name="Steward C.A."/>
            <person name="Sims S.K."/>
            <person name="Jones M.C."/>
            <person name="Searle S."/>
            <person name="Scott C."/>
            <person name="Howe K."/>
            <person name="Hunt S.E."/>
            <person name="Andrews T.D."/>
            <person name="Gilbert J.G.R."/>
            <person name="Swarbreck D."/>
            <person name="Ashurst J.L."/>
            <person name="Taylor A."/>
            <person name="Battles J."/>
            <person name="Bird C.P."/>
            <person name="Ainscough R."/>
            <person name="Almeida J.P."/>
            <person name="Ashwell R.I.S."/>
            <person name="Ambrose K.D."/>
            <person name="Babbage A.K."/>
            <person name="Bagguley C.L."/>
            <person name="Bailey J."/>
            <person name="Banerjee R."/>
            <person name="Bates K."/>
            <person name="Beasley H."/>
            <person name="Bray-Allen S."/>
            <person name="Brown A.J."/>
            <person name="Brown J.Y."/>
            <person name="Burford D.C."/>
            <person name="Burrill W."/>
            <person name="Burton J."/>
            <person name="Cahill P."/>
            <person name="Camire D."/>
            <person name="Carter N.P."/>
            <person name="Chapman J.C."/>
            <person name="Clark S.Y."/>
            <person name="Clarke G."/>
            <person name="Clee C.M."/>
            <person name="Clegg S."/>
            <person name="Corby N."/>
            <person name="Coulson A."/>
            <person name="Dhami P."/>
            <person name="Dutta I."/>
            <person name="Dunn M."/>
            <person name="Faulkner L."/>
            <person name="Frankish A."/>
            <person name="Frankland J.A."/>
            <person name="Garner P."/>
            <person name="Garnett J."/>
            <person name="Gribble S."/>
            <person name="Griffiths C."/>
            <person name="Grocock R."/>
            <person name="Gustafson E."/>
            <person name="Hammond S."/>
            <person name="Harley J.L."/>
            <person name="Hart E."/>
            <person name="Heath P.D."/>
            <person name="Ho T.P."/>
            <person name="Hopkins B."/>
            <person name="Horne J."/>
            <person name="Howden P.J."/>
            <person name="Huckle E."/>
            <person name="Hynds C."/>
            <person name="Johnson C."/>
            <person name="Johnson D."/>
            <person name="Kana A."/>
            <person name="Kay M."/>
            <person name="Kimberley A.M."/>
            <person name="Kershaw J.K."/>
            <person name="Kokkinaki M."/>
            <person name="Laird G.K."/>
            <person name="Lawlor S."/>
            <person name="Lee H.M."/>
            <person name="Leongamornlert D.A."/>
            <person name="Laird G."/>
            <person name="Lloyd C."/>
            <person name="Lloyd D.M."/>
            <person name="Loveland J."/>
            <person name="Lovell J."/>
            <person name="McLaren S."/>
            <person name="McLay K.E."/>
            <person name="McMurray A."/>
            <person name="Mashreghi-Mohammadi M."/>
            <person name="Matthews L."/>
            <person name="Milne S."/>
            <person name="Nickerson T."/>
            <person name="Nguyen M."/>
            <person name="Overton-Larty E."/>
            <person name="Palmer S.A."/>
            <person name="Pearce A.V."/>
            <person name="Peck A.I."/>
            <person name="Pelan S."/>
            <person name="Phillimore B."/>
            <person name="Porter K."/>
            <person name="Rice C.M."/>
            <person name="Rogosin A."/>
            <person name="Ross M.T."/>
            <person name="Sarafidou T."/>
            <person name="Sehra H.K."/>
            <person name="Shownkeen R."/>
            <person name="Skuce C.D."/>
            <person name="Smith M."/>
            <person name="Standring L."/>
            <person name="Sycamore N."/>
            <person name="Tester J."/>
            <person name="Thorpe A."/>
            <person name="Torcasso W."/>
            <person name="Tracey A."/>
            <person name="Tromans A."/>
            <person name="Tsolas J."/>
            <person name="Wall M."/>
            <person name="Walsh J."/>
            <person name="Wang H."/>
            <person name="Weinstock K."/>
            <person name="West A.P."/>
            <person name="Willey D.L."/>
            <person name="Whitehead S.L."/>
            <person name="Wilming L."/>
            <person name="Wray P.W."/>
            <person name="Young L."/>
            <person name="Chen Y."/>
            <person name="Lovering R.C."/>
            <person name="Moschonas N.K."/>
            <person name="Siebert R."/>
            <person name="Fechtel K."/>
            <person name="Bentley D."/>
            <person name="Durbin R.M."/>
            <person name="Hubbard T."/>
            <person name="Doucette-Stamm L."/>
            <person name="Beck S."/>
            <person name="Smith D.R."/>
            <person name="Rogers J."/>
        </authorList>
    </citation>
    <scope>NUCLEOTIDE SEQUENCE [LARGE SCALE GENOMIC DNA]</scope>
</reference>
<reference key="7">
    <citation type="journal article" date="2004" name="Genome Res.">
        <title>The status, quality, and expansion of the NIH full-length cDNA project: the Mammalian Gene Collection (MGC).</title>
        <authorList>
            <consortium name="The MGC Project Team"/>
        </authorList>
    </citation>
    <scope>NUCLEOTIDE SEQUENCE [LARGE SCALE MRNA]</scope>
    <source>
        <tissue>Brain</tissue>
        <tissue>Lymph</tissue>
        <tissue>Uterus</tissue>
    </source>
</reference>
<reference key="8">
    <citation type="submission" date="1998-11" db="EMBL/GenBank/DDBJ databases">
        <title>Cloning, expression, affinity purification and characterization of polyhistidine-tagged cytosolic Saccharomyces cerevisiae and human inorganic pyrophosphatases for differential screening of compounds for antifungal activity.</title>
        <authorList>
            <person name="Rumsfeld J."/>
            <person name="Ziegelbauer K."/>
            <person name="Spaltmann F."/>
        </authorList>
    </citation>
    <scope>NUCLEOTIDE SEQUENCE [MRNA] OF 5-286</scope>
</reference>
<reference key="9">
    <citation type="submission" date="2008-12" db="UniProtKB">
        <authorList>
            <person name="Lubec G."/>
            <person name="Afjehi-Sadat L."/>
            <person name="Chen W.-Q."/>
            <person name="Sun Y."/>
        </authorList>
    </citation>
    <scope>PROTEIN SEQUENCE OF 10-18; 26-41; 58-70; 80-88; 110-128; 140-191; 193-221 AND 239-253</scope>
    <scope>IDENTIFICATION BY MASS SPECTROMETRY</scope>
    <source>
        <tissue>Brain</tissue>
        <tissue>Cajal-Retzius cell</tissue>
        <tissue>Fetal brain cortex</tissue>
    </source>
</reference>
<reference key="10">
    <citation type="submission" date="1995-03" db="EMBL/GenBank/DDBJ databases">
        <title>Partial sequence of the human inorganic pyrophosphatase.</title>
        <authorList>
            <person name="Lacroix J."/>
            <person name="Vigneron M."/>
            <person name="Kedinger C."/>
        </authorList>
    </citation>
    <scope>NUCLEOTIDE SEQUENCE [MRNA] OF 83-196</scope>
</reference>
<reference key="11">
    <citation type="journal article" date="2009" name="Anal. Chem.">
        <title>Lys-N and trypsin cover complementary parts of the phosphoproteome in a refined SCX-based approach.</title>
        <authorList>
            <person name="Gauci S."/>
            <person name="Helbig A.O."/>
            <person name="Slijper M."/>
            <person name="Krijgsveld J."/>
            <person name="Heck A.J."/>
            <person name="Mohammed S."/>
        </authorList>
    </citation>
    <scope>ACETYLATION [LARGE SCALE ANALYSIS] AT SER-2</scope>
    <scope>CLEAVAGE OF INITIATOR METHIONINE [LARGE SCALE ANALYSIS]</scope>
    <scope>IDENTIFICATION BY MASS SPECTROMETRY [LARGE SCALE ANALYSIS]</scope>
</reference>
<reference key="12">
    <citation type="journal article" date="2009" name="Science">
        <title>Lysine acetylation targets protein complexes and co-regulates major cellular functions.</title>
        <authorList>
            <person name="Choudhary C."/>
            <person name="Kumar C."/>
            <person name="Gnad F."/>
            <person name="Nielsen M.L."/>
            <person name="Rehman M."/>
            <person name="Walther T.C."/>
            <person name="Olsen J.V."/>
            <person name="Mann M."/>
        </authorList>
    </citation>
    <scope>ACETYLATION [LARGE SCALE ANALYSIS] AT LYS-57 AND LYS-228</scope>
    <scope>IDENTIFICATION BY MASS SPECTROMETRY [LARGE SCALE ANALYSIS]</scope>
</reference>
<reference key="13">
    <citation type="journal article" date="2010" name="Sci. Signal.">
        <title>Quantitative phosphoproteomics reveals widespread full phosphorylation site occupancy during mitosis.</title>
        <authorList>
            <person name="Olsen J.V."/>
            <person name="Vermeulen M."/>
            <person name="Santamaria A."/>
            <person name="Kumar C."/>
            <person name="Miller M.L."/>
            <person name="Jensen L.J."/>
            <person name="Gnad F."/>
            <person name="Cox J."/>
            <person name="Jensen T.S."/>
            <person name="Nigg E.A."/>
            <person name="Brunak S."/>
            <person name="Mann M."/>
        </authorList>
    </citation>
    <scope>PHOSPHORYLATION [LARGE SCALE ANALYSIS] AT SER-250</scope>
    <scope>IDENTIFICATION BY MASS SPECTROMETRY [LARGE SCALE ANALYSIS]</scope>
    <source>
        <tissue>Cervix carcinoma</tissue>
    </source>
</reference>
<reference key="14">
    <citation type="journal article" date="2011" name="BMC Syst. Biol.">
        <title>Initial characterization of the human central proteome.</title>
        <authorList>
            <person name="Burkard T.R."/>
            <person name="Planyavsky M."/>
            <person name="Kaupe I."/>
            <person name="Breitwieser F.P."/>
            <person name="Buerckstuemmer T."/>
            <person name="Bennett K.L."/>
            <person name="Superti-Furga G."/>
            <person name="Colinge J."/>
        </authorList>
    </citation>
    <scope>IDENTIFICATION BY MASS SPECTROMETRY [LARGE SCALE ANALYSIS]</scope>
</reference>
<reference key="15">
    <citation type="journal article" date="2012" name="Mol. Cell. Proteomics">
        <title>Comparative large-scale characterisation of plant vs. mammal proteins reveals similar and idiosyncratic N-alpha acetylation features.</title>
        <authorList>
            <person name="Bienvenut W.V."/>
            <person name="Sumpton D."/>
            <person name="Martinez A."/>
            <person name="Lilla S."/>
            <person name="Espagne C."/>
            <person name="Meinnel T."/>
            <person name="Giglione C."/>
        </authorList>
    </citation>
    <scope>ACETYLATION [LARGE SCALE ANALYSIS] AT SER-2</scope>
    <scope>CLEAVAGE OF INITIATOR METHIONINE [LARGE SCALE ANALYSIS]</scope>
    <scope>IDENTIFICATION BY MASS SPECTROMETRY [LARGE SCALE ANALYSIS]</scope>
</reference>
<reference key="16">
    <citation type="journal article" date="2012" name="Proc. Natl. Acad. Sci. U.S.A.">
        <title>N-terminal acetylome analyses and functional insights of the N-terminal acetyltransferase NatB.</title>
        <authorList>
            <person name="Van Damme P."/>
            <person name="Lasa M."/>
            <person name="Polevoda B."/>
            <person name="Gazquez C."/>
            <person name="Elosegui-Artola A."/>
            <person name="Kim D.S."/>
            <person name="De Juan-Pardo E."/>
            <person name="Demeyer K."/>
            <person name="Hole K."/>
            <person name="Larrea E."/>
            <person name="Timmerman E."/>
            <person name="Prieto J."/>
            <person name="Arnesen T."/>
            <person name="Sherman F."/>
            <person name="Gevaert K."/>
            <person name="Aldabe R."/>
        </authorList>
    </citation>
    <scope>ACETYLATION [LARGE SCALE ANALYSIS] AT SER-2</scope>
    <scope>CLEAVAGE OF INITIATOR METHIONINE [LARGE SCALE ANALYSIS]</scope>
    <scope>IDENTIFICATION BY MASS SPECTROMETRY [LARGE SCALE ANALYSIS]</scope>
</reference>
<reference key="17">
    <citation type="journal article" date="2014" name="J. Proteomics">
        <title>An enzyme assisted RP-RPLC approach for in-depth analysis of human liver phosphoproteome.</title>
        <authorList>
            <person name="Bian Y."/>
            <person name="Song C."/>
            <person name="Cheng K."/>
            <person name="Dong M."/>
            <person name="Wang F."/>
            <person name="Huang J."/>
            <person name="Sun D."/>
            <person name="Wang L."/>
            <person name="Ye M."/>
            <person name="Zou H."/>
        </authorList>
    </citation>
    <scope>IDENTIFICATION BY MASS SPECTROMETRY [LARGE SCALE ANALYSIS]</scope>
    <source>
        <tissue>Liver</tissue>
    </source>
</reference>
<reference key="18">
    <citation type="journal article" date="2006" name="Science">
        <title>The consensus coding sequences of human breast and colorectal cancers.</title>
        <authorList>
            <person name="Sjoeblom T."/>
            <person name="Jones S."/>
            <person name="Wood L.D."/>
            <person name="Parsons D.W."/>
            <person name="Lin J."/>
            <person name="Barber T.D."/>
            <person name="Mandelker D."/>
            <person name="Leary R.J."/>
            <person name="Ptak J."/>
            <person name="Silliman N."/>
            <person name="Szabo S."/>
            <person name="Buckhaults P."/>
            <person name="Farrell C."/>
            <person name="Meeh P."/>
            <person name="Markowitz S.D."/>
            <person name="Willis J."/>
            <person name="Dawson D."/>
            <person name="Willson J.K.V."/>
            <person name="Gazdar A.F."/>
            <person name="Hartigan J."/>
            <person name="Wu L."/>
            <person name="Liu C."/>
            <person name="Parmigiani G."/>
            <person name="Park B.H."/>
            <person name="Bachman K.E."/>
            <person name="Papadopoulos N."/>
            <person name="Vogelstein B."/>
            <person name="Kinzler K.W."/>
            <person name="Velculescu V.E."/>
        </authorList>
    </citation>
    <scope>VARIANT [LARGE SCALE ANALYSIS] ASN-57</scope>
</reference>
<keyword id="KW-0002">3D-structure</keyword>
<keyword id="KW-0007">Acetylation</keyword>
<keyword id="KW-0963">Cytoplasm</keyword>
<keyword id="KW-0903">Direct protein sequencing</keyword>
<keyword id="KW-0378">Hydrolase</keyword>
<keyword id="KW-0460">Magnesium</keyword>
<keyword id="KW-0479">Metal-binding</keyword>
<keyword id="KW-0597">Phosphoprotein</keyword>
<keyword id="KW-1267">Proteomics identification</keyword>
<keyword id="KW-1185">Reference proteome</keyword>
<protein>
    <recommendedName>
        <fullName>Inorganic pyrophosphatase</fullName>
        <ecNumber>3.6.1.1</ecNumber>
    </recommendedName>
    <alternativeName>
        <fullName>Pyrophosphate phospho-hydrolase</fullName>
        <shortName>PPase</shortName>
    </alternativeName>
</protein>
<sequence>MSGFSTEERAAPFSLEYRVFLKNEKGQYISPFHDIPIYADKDVFHMVVEVPRWSNAKMEIATKDPLNPIKQDVKKGKLRYVANLFPYKGYIWNYGAIPQTWEDPGHNDKHTGCCGDNDPIDVCEIGSKVCARGEIIGVKVLGILAMIDEGETDWKVIAINVDDPDAANYNDINDVKRLKPGYLEATVDWFRRYKVPDGKPENEFAFNAEFKDKDFAIDIIKSTHDHWKALVTKKTNGKGISCMNTTLSESPFKCDPDAARAIVDALPPPCESACTVPTDVDKWFHHQKN</sequence>
<evidence type="ECO:0000250" key="1"/>
<evidence type="ECO:0000269" key="2">
    <source>
    </source>
</evidence>
<evidence type="ECO:0000269" key="3">
    <source>
    </source>
</evidence>
<evidence type="ECO:0000305" key="4"/>
<evidence type="ECO:0007744" key="5">
    <source>
    </source>
</evidence>
<evidence type="ECO:0007744" key="6">
    <source>
    </source>
</evidence>
<evidence type="ECO:0007744" key="7">
    <source>
    </source>
</evidence>
<evidence type="ECO:0007744" key="8">
    <source>
    </source>
</evidence>
<evidence type="ECO:0007744" key="9">
    <source>
    </source>
</evidence>
<evidence type="ECO:0007829" key="10">
    <source>
        <dbReference type="PDB" id="6C45"/>
    </source>
</evidence>
<evidence type="ECO:0007829" key="11">
    <source>
        <dbReference type="PDB" id="7BTN"/>
    </source>
</evidence>
<gene>
    <name type="primary">PPA1</name>
    <name type="synonym">IOPPP</name>
    <name type="synonym">PP</name>
</gene>
<proteinExistence type="evidence at protein level"/>
<dbReference type="EC" id="3.6.1.1"/>
<dbReference type="EMBL" id="AF154065">
    <property type="protein sequence ID" value="AAD34643.1"/>
    <property type="molecule type" value="mRNA"/>
</dbReference>
<dbReference type="EMBL" id="AB026723">
    <property type="protein sequence ID" value="BAA84702.1"/>
    <property type="molecule type" value="mRNA"/>
</dbReference>
<dbReference type="EMBL" id="AF217186">
    <property type="protein sequence ID" value="AAG36780.1"/>
    <property type="molecule type" value="mRNA"/>
</dbReference>
<dbReference type="EMBL" id="AF092439">
    <property type="protein sequence ID" value="AAP97214.1"/>
    <property type="molecule type" value="mRNA"/>
</dbReference>
<dbReference type="EMBL" id="AF119665">
    <property type="protein sequence ID" value="AAF17222.1"/>
    <property type="molecule type" value="mRNA"/>
</dbReference>
<dbReference type="EMBL" id="AL731540">
    <property type="status" value="NOT_ANNOTATED_CDS"/>
    <property type="molecule type" value="Genomic_DNA"/>
</dbReference>
<dbReference type="EMBL" id="BC001022">
    <property type="protein sequence ID" value="AAH01022.3"/>
    <property type="molecule type" value="mRNA"/>
</dbReference>
<dbReference type="EMBL" id="BC061581">
    <property type="protein sequence ID" value="AAH61581.2"/>
    <property type="molecule type" value="mRNA"/>
</dbReference>
<dbReference type="EMBL" id="BC105034">
    <property type="protein sequence ID" value="AAI05035.1"/>
    <property type="molecule type" value="mRNA"/>
</dbReference>
<dbReference type="EMBL" id="BC105036">
    <property type="protein sequence ID" value="AAI05037.1"/>
    <property type="molecule type" value="mRNA"/>
</dbReference>
<dbReference type="EMBL" id="BC107882">
    <property type="protein sequence ID" value="AAI07883.1"/>
    <property type="molecule type" value="mRNA"/>
</dbReference>
<dbReference type="EMBL" id="AF108211">
    <property type="protein sequence ID" value="AAD24964.1"/>
    <property type="molecule type" value="mRNA"/>
</dbReference>
<dbReference type="EMBL" id="Z48605">
    <property type="protein sequence ID" value="CAA88494.1"/>
    <property type="molecule type" value="mRNA"/>
</dbReference>
<dbReference type="CCDS" id="CCDS7299.1"/>
<dbReference type="RefSeq" id="NP_066952.1">
    <property type="nucleotide sequence ID" value="NM_021129.4"/>
</dbReference>
<dbReference type="PDB" id="6C45">
    <property type="method" value="X-ray"/>
    <property type="resolution" value="2.39 A"/>
    <property type="chains" value="A/B/C/D=1-289"/>
</dbReference>
<dbReference type="PDB" id="7BTN">
    <property type="method" value="X-ray"/>
    <property type="resolution" value="2.38 A"/>
    <property type="chains" value="A=1-289"/>
</dbReference>
<dbReference type="PDB" id="7CMO">
    <property type="method" value="X-ray"/>
    <property type="resolution" value="3.40 A"/>
    <property type="chains" value="A/B/C/D=1-289"/>
</dbReference>
<dbReference type="PDB" id="8J7Q">
    <property type="method" value="X-ray"/>
    <property type="resolution" value="1.69 A"/>
    <property type="chains" value="A=1-289"/>
</dbReference>
<dbReference type="PDBsum" id="6C45"/>
<dbReference type="PDBsum" id="7BTN"/>
<dbReference type="PDBsum" id="7CMO"/>
<dbReference type="PDBsum" id="8J7Q"/>
<dbReference type="SMR" id="Q15181"/>
<dbReference type="BioGRID" id="111460">
    <property type="interactions" value="196"/>
</dbReference>
<dbReference type="FunCoup" id="Q15181">
    <property type="interactions" value="1739"/>
</dbReference>
<dbReference type="IntAct" id="Q15181">
    <property type="interactions" value="44"/>
</dbReference>
<dbReference type="MINT" id="Q15181"/>
<dbReference type="STRING" id="9606.ENSP00000362329"/>
<dbReference type="GlyGen" id="Q15181">
    <property type="glycosylation" value="2 sites, 1 N-linked glycan (1 site), 1 O-linked glycan (1 site)"/>
</dbReference>
<dbReference type="iPTMnet" id="Q15181"/>
<dbReference type="MetOSite" id="Q15181"/>
<dbReference type="PhosphoSitePlus" id="Q15181"/>
<dbReference type="SwissPalm" id="Q15181"/>
<dbReference type="BioMuta" id="PPA1"/>
<dbReference type="DMDM" id="8247940"/>
<dbReference type="REPRODUCTION-2DPAGE" id="IPI00015018"/>
<dbReference type="jPOST" id="Q15181"/>
<dbReference type="MassIVE" id="Q15181"/>
<dbReference type="PaxDb" id="9606-ENSP00000362329"/>
<dbReference type="PeptideAtlas" id="Q15181"/>
<dbReference type="ProteomicsDB" id="60485"/>
<dbReference type="Pumba" id="Q15181"/>
<dbReference type="TopDownProteomics" id="Q15181"/>
<dbReference type="Antibodypedia" id="14866">
    <property type="antibodies" value="267 antibodies from 32 providers"/>
</dbReference>
<dbReference type="DNASU" id="5464"/>
<dbReference type="Ensembl" id="ENST00000373232.8">
    <property type="protein sequence ID" value="ENSP00000362329.2"/>
    <property type="gene ID" value="ENSG00000180817.12"/>
</dbReference>
<dbReference type="GeneID" id="5464"/>
<dbReference type="KEGG" id="hsa:5464"/>
<dbReference type="MANE-Select" id="ENST00000373232.8">
    <property type="protein sequence ID" value="ENSP00000362329.2"/>
    <property type="RefSeq nucleotide sequence ID" value="NM_021129.4"/>
    <property type="RefSeq protein sequence ID" value="NP_066952.1"/>
</dbReference>
<dbReference type="AGR" id="HGNC:9226"/>
<dbReference type="CTD" id="5464"/>
<dbReference type="DisGeNET" id="5464"/>
<dbReference type="GeneCards" id="PPA1"/>
<dbReference type="HGNC" id="HGNC:9226">
    <property type="gene designation" value="PPA1"/>
</dbReference>
<dbReference type="HPA" id="ENSG00000180817">
    <property type="expression patterns" value="Low tissue specificity"/>
</dbReference>
<dbReference type="MIM" id="179030">
    <property type="type" value="gene"/>
</dbReference>
<dbReference type="neXtProt" id="NX_Q15181"/>
<dbReference type="OpenTargets" id="ENSG00000180817"/>
<dbReference type="PharmGKB" id="PA33550"/>
<dbReference type="VEuPathDB" id="HostDB:ENSG00000180817"/>
<dbReference type="eggNOG" id="KOG1626">
    <property type="taxonomic scope" value="Eukaryota"/>
</dbReference>
<dbReference type="GeneTree" id="ENSGT00390000017004"/>
<dbReference type="HOGENOM" id="CLU_040684_0_2_1"/>
<dbReference type="InParanoid" id="Q15181"/>
<dbReference type="OMA" id="GVWAMID"/>
<dbReference type="OrthoDB" id="1608002at2759"/>
<dbReference type="PAN-GO" id="Q15181">
    <property type="GO annotations" value="4 GO annotations based on evolutionary models"/>
</dbReference>
<dbReference type="PhylomeDB" id="Q15181"/>
<dbReference type="TreeFam" id="TF300887"/>
<dbReference type="BRENDA" id="3.6.1.1">
    <property type="organism ID" value="2681"/>
</dbReference>
<dbReference type="PathwayCommons" id="Q15181"/>
<dbReference type="Reactome" id="R-HSA-379716">
    <property type="pathway name" value="Cytosolic tRNA aminoacylation"/>
</dbReference>
<dbReference type="Reactome" id="R-HSA-71737">
    <property type="pathway name" value="Pyrophosphate hydrolysis"/>
</dbReference>
<dbReference type="SignaLink" id="Q15181"/>
<dbReference type="BioGRID-ORCS" id="5464">
    <property type="hits" value="605 hits in 1124 CRISPR screens"/>
</dbReference>
<dbReference type="CD-CODE" id="91857CE7">
    <property type="entry name" value="Nucleolus"/>
</dbReference>
<dbReference type="ChiTaRS" id="PPA1">
    <property type="organism name" value="human"/>
</dbReference>
<dbReference type="GenomeRNAi" id="5464"/>
<dbReference type="Pharos" id="Q15181">
    <property type="development level" value="Tbio"/>
</dbReference>
<dbReference type="PRO" id="PR:Q15181"/>
<dbReference type="Proteomes" id="UP000005640">
    <property type="component" value="Chromosome 10"/>
</dbReference>
<dbReference type="RNAct" id="Q15181">
    <property type="molecule type" value="protein"/>
</dbReference>
<dbReference type="Bgee" id="ENSG00000180817">
    <property type="expression patterns" value="Expressed in cerebellar vermis and 207 other cell types or tissues"/>
</dbReference>
<dbReference type="ExpressionAtlas" id="Q15181">
    <property type="expression patterns" value="baseline and differential"/>
</dbReference>
<dbReference type="GO" id="GO:0005737">
    <property type="term" value="C:cytoplasm"/>
    <property type="evidence" value="ECO:0000304"/>
    <property type="project" value="UniProtKB"/>
</dbReference>
<dbReference type="GO" id="GO:0005829">
    <property type="term" value="C:cytosol"/>
    <property type="evidence" value="ECO:0000304"/>
    <property type="project" value="Reactome"/>
</dbReference>
<dbReference type="GO" id="GO:0070062">
    <property type="term" value="C:extracellular exosome"/>
    <property type="evidence" value="ECO:0007005"/>
    <property type="project" value="UniProtKB"/>
</dbReference>
<dbReference type="GO" id="GO:0004427">
    <property type="term" value="F:inorganic diphosphate phosphatase activity"/>
    <property type="evidence" value="ECO:0000318"/>
    <property type="project" value="GO_Central"/>
</dbReference>
<dbReference type="GO" id="GO:0000287">
    <property type="term" value="F:magnesium ion binding"/>
    <property type="evidence" value="ECO:0007669"/>
    <property type="project" value="InterPro"/>
</dbReference>
<dbReference type="GO" id="GO:0006796">
    <property type="term" value="P:phosphate-containing compound metabolic process"/>
    <property type="evidence" value="ECO:0000318"/>
    <property type="project" value="GO_Central"/>
</dbReference>
<dbReference type="CDD" id="cd00412">
    <property type="entry name" value="pyrophosphatase"/>
    <property type="match status" value="1"/>
</dbReference>
<dbReference type="FunFam" id="3.90.80.10:FF:000005">
    <property type="entry name" value="Pyrophosphatase (inorganic) 2"/>
    <property type="match status" value="1"/>
</dbReference>
<dbReference type="Gene3D" id="3.90.80.10">
    <property type="entry name" value="Inorganic pyrophosphatase"/>
    <property type="match status" value="1"/>
</dbReference>
<dbReference type="InterPro" id="IPR008162">
    <property type="entry name" value="Pyrophosphatase"/>
</dbReference>
<dbReference type="InterPro" id="IPR036649">
    <property type="entry name" value="Pyrophosphatase_sf"/>
</dbReference>
<dbReference type="PANTHER" id="PTHR10286">
    <property type="entry name" value="INORGANIC PYROPHOSPHATASE"/>
    <property type="match status" value="1"/>
</dbReference>
<dbReference type="Pfam" id="PF00719">
    <property type="entry name" value="Pyrophosphatase"/>
    <property type="match status" value="1"/>
</dbReference>
<dbReference type="SUPFAM" id="SSF50324">
    <property type="entry name" value="Inorganic pyrophosphatase"/>
    <property type="match status" value="1"/>
</dbReference>
<dbReference type="PROSITE" id="PS00387">
    <property type="entry name" value="PPASE"/>
    <property type="match status" value="1"/>
</dbReference>
<accession>Q15181</accession>
<accession>Q2M348</accession>
<accession>Q5SQT7</accession>
<accession>Q6P7P4</accession>
<accession>Q9UQJ5</accession>
<accession>Q9Y5B1</accession>
<name>IPYR_HUMAN</name>